<comment type="function">
    <text>Picornain 3C-like protease is a thiol protease that cleaves at Gln-|-Gly or Gln-|-Ser sites in the P1 and P2 polyproteins.</text>
</comment>
<comment type="function">
    <text>The VPg-NTB polyprotein may act as a membrane-anchor for the replication complex.</text>
</comment>
<comment type="catalytic activity">
    <reaction evidence="2">
        <text>RNA(n) + a ribonucleoside 5'-triphosphate = RNA(n+1) + diphosphate</text>
        <dbReference type="Rhea" id="RHEA:21248"/>
        <dbReference type="Rhea" id="RHEA-COMP:14527"/>
        <dbReference type="Rhea" id="RHEA-COMP:17342"/>
        <dbReference type="ChEBI" id="CHEBI:33019"/>
        <dbReference type="ChEBI" id="CHEBI:61557"/>
        <dbReference type="ChEBI" id="CHEBI:140395"/>
        <dbReference type="EC" id="2.7.7.48"/>
    </reaction>
</comment>
<comment type="subcellular location">
    <molecule>Viral genome-linked protein</molecule>
    <subcellularLocation>
        <location evidence="9">Host endoplasmic reticulum lumen</location>
    </subcellularLocation>
</comment>
<comment type="subcellular location">
    <molecule>Putative ATP-dependent helicase</molecule>
    <subcellularLocation>
        <location>Host endoplasmic reticulum membrane</location>
        <topology>Single-pass membrane protein</topology>
    </subcellularLocation>
    <text>The NTB-VPg polyprotein is associated with endoplasmic-derived membranes that are active in viral replication.</text>
</comment>
<comment type="PTM">
    <text evidence="5 6">Specific enzymatic cleavages by picornain 3C-like protease in vivo yield mature proteins. Picornain 3C-like protease is autocatalytically processed. NTB exists as NTB-VPg polyprotein as well as NTB mature protein.</text>
</comment>
<comment type="PTM">
    <text evidence="1">VPg is uridylylated by the polymerase and is covalently linked to the 5'-end of genomic RNA. This uridylylated form acts as a nucleotide-peptide primer for the polymerase (By similarity).</text>
</comment>
<comment type="similarity">
    <text evidence="9">Belongs to the nepoviruses RNA1 polyprotein family.</text>
</comment>
<comment type="caution">
    <text evidence="9">It is uncertain whether Met-1 or Met-122 is the initiator.</text>
</comment>
<comment type="sequence caution" evidence="9">
    <conflict type="erroneous initiation">
        <sequence resource="EMBL-CDS" id="AAA47942"/>
    </conflict>
</comment>
<evidence type="ECO:0000250" key="1"/>
<evidence type="ECO:0000255" key="2">
    <source>
        <dbReference type="PROSITE-ProRule" id="PRU00539"/>
    </source>
</evidence>
<evidence type="ECO:0000255" key="3">
    <source>
        <dbReference type="PROSITE-ProRule" id="PRU00551"/>
    </source>
</evidence>
<evidence type="ECO:0000255" key="4">
    <source>
        <dbReference type="PROSITE-ProRule" id="PRU01222"/>
    </source>
</evidence>
<evidence type="ECO:0000269" key="5">
    <source>
    </source>
</evidence>
<evidence type="ECO:0000269" key="6">
    <source>
    </source>
</evidence>
<evidence type="ECO:0000269" key="7">
    <source>
    </source>
</evidence>
<evidence type="ECO:0000269" key="8">
    <source>
    </source>
</evidence>
<evidence type="ECO:0000305" key="9"/>
<sequence length="2197" mass="244130">MSSICFAGGNHARLPSKAAYYRAISDRELDREGRFPCGCLAQYTVQAPPPAKTQEKAVGRSADLQKGNVAPLKKQRCDVVVAVSGPPPLELVYPARVGQHRLDQPSKGPLAVPSAKQTSTAMEVVLSVGEAALTAPWLLCSYKSGVSSPPPPMTQRQQFAAIKRRLVQKGQQIIRELIRARKAAKYAAFAARKKAAAVAAQKARAEAPRLAAQKAAIAKILRDRQLVSLPPPPPPSAARLAAEAELASKSASLQRLKAFHRANRVRPVLNNSFPSPPLACKPDPALLERLRLATPSRCTVATKRQRDFVVAPLATQIRVAKCASHQEAYDSCRSILIEEWPESRYLFGPLSFVGDWEHVPGMLMQYRLCVLFSMVRDVMPALSLVADTLHALRSGTAPNIVFKNAMSTANQILECSHSSHAAQGFGNFLSRGKSAAINLASGLSSFVGEKVVSGANHVVNKASEVIVDKLFVPFVKLLREHFDDTIGKWIPKLLGATQKIEELWRWSLEWAQNMSKKLDVSLRVLRGSALVGVGLLLVSGILYFAEQLLRSFGLLIVAGSFISMFVGGCLLAYAGSMAGIFDEQMMRVRGILCEIPMLLYLKAQPDPFFPKKSGGRAPTQGLTDVFGVPLSIMNAIGDGLVHHSLDTLTLMGKFGAAMDNVRKGITCMRSFVSWLMEHLALALDKITGKRTSFFRELATLINFDVEKWVRDSQQYLLAAEIYVDGDTVVMDTCRHLLDKGLKLQRMMVSAKSGCSFNYGRLVGDLVKRLSDLHKRYCASGRRVHYRLAPFWVYLYGGPRCGKSLFAQSFMNAAVDFMGTTVDNCYFKNARDDFWSGYRQEAICCVDDLSSCETQPSIESEFIQLITTMRYGLNMAGVEEKGASFDSKMVITTSNFFTAPTTAKIASKAAYNDRRHACILVQRKEGVAYNPSDPAAAAEAMFVDSTTQHPLSEWMSMQELSAELLLRYQQHREAQHAEYSYWKSTSRTSHDVFDILQKCVNGDTQWLSLPVDVIPPSIRQKHKGNRVFAIDGRIFMFDYMTLEYDEIKEKENLDARHLEARILEKYGDTRLLLEKWGANGVVAQFIEQLLEGPSNVASLEVLSKDSLESHKEFFSTLGLIERATLRAVQKKIDAAREDLMHLSGLKPGRSLTELFVEAYDWVYANGGKLLLVLAAVILILFFGSACIKLMQAIFCGAAGGTVSMAAVGKMTVQSTIPSGSYADVYNARNMTRVFRPQSVQGSSLAEAQFNESHAVNMLVRIDLPDGNIISACRFRGKSLALTKHQALTIPPGAKIHIVYTDNNGNTKAPLTHFFQPTGPNGEHFLRFFNGTEVCIYSHPQLSALPGAPQNYFLKDVEKISGDIAIKGCGIKLGRTSVGECVGVKDNEPVLNHWRAVAKVRTTKITIDNYSEGGDYSNDLPTSIISEYVNSPEDCGALLVAHLEGGYKIIGMHVAGSSYPVEVDGVQMPRYISHASFFPDYSSFAPCQSSVIKSLIQEAGVEERGVSKVGHIKDPAETPHVGGKTKLELVDEAFLVPSPVEVKIPSILSKDDPRIPEAYKGYDPLGDAMEKFYEPMLDLDEDVLESVMADMYDEFYDCQTTLRIMSDDEVINGSDFGFNIEAVVKGTSEGYPFVLSRRPGEKGKARFLEELEPQPGDTKPKYKLVVGTEVHSAMVAMEQQARTEVPLLIGMDVPKDERLKPSKVLEKPKTRTFVVLPMHYNLLLRKYVGILCSSMQVNRHRLACAVGTNPYSRDWTDIYQRLAEKNSVALNCDYSRFDGLLNYQAYVHIVNFINKLYNDEHSIVRGNLLMAMYGRWSVCGQRVFEVRAGMPSGCALTVIINSLFNEMLIRYVYRITVPRPLVNNFKQEVCLIVYGDDNLISIKPDTMKYFNGEQIKTILAKYKVTITDGSDKNSPVLRAKPLKQLDFLKRGFRVESDGRVLAPLDLQAIYSSLYYINPQGNILKSLFLNAQVALRELYLHGDVEQFTAVRNFYVNQIGGNFLSLPQWRHCASFHDEQYSQWKPWSPVKFLEVDVPDAKFLQHKAPATALSIVADRLAVAGPGWRNKDPDRYLLVSLTSLKANEGGLYFPVDYGEGTGQQATEASIRAYRRLKDHRVRHMRDSWNEGKTIVFRCEGPFVSGWAAAISFGTSVGMNAQDLLINYGIQGGAHKEYLGRYFVGARFKELERYDRPFQSRIIAS</sequence>
<feature type="chain" id="PRO_0000037086" description="Protein X1">
    <location>
        <begin position="1"/>
        <end position="423"/>
    </location>
</feature>
<feature type="chain" id="PRO_0000037087" description="Protein X2">
    <location>
        <begin position="424"/>
        <end position="620"/>
    </location>
</feature>
<feature type="chain" id="PRO_0000037088" description="Putative ATP-dependent helicase">
    <location>
        <begin position="621"/>
        <end position="1212"/>
    </location>
</feature>
<feature type="chain" id="PRO_0000037089" description="Viral genome-linked protein">
    <location>
        <begin position="1213"/>
        <end position="1239"/>
    </location>
</feature>
<feature type="chain" id="PRO_0000037090" description="Picornain 3C-like protease">
    <location>
        <begin position="1240"/>
        <end position="1486"/>
    </location>
</feature>
<feature type="chain" id="PRO_0000037091" description="RNA-directed RNA polymerase">
    <location>
        <begin position="1487"/>
        <end position="2197"/>
    </location>
</feature>
<feature type="topological domain" description="Cytoplasmic" evidence="7">
    <location>
        <begin position="621"/>
        <end position="1167"/>
    </location>
</feature>
<feature type="transmembrane region" description="Helical" evidence="9">
    <location>
        <begin position="1168"/>
        <end position="1188"/>
    </location>
</feature>
<feature type="topological domain" description="Lumenal" evidence="7">
    <location>
        <begin position="1189"/>
        <end position="1212"/>
    </location>
</feature>
<feature type="domain" description="SF3 helicase" evidence="3">
    <location>
        <begin position="766"/>
        <end position="933"/>
    </location>
</feature>
<feature type="domain" description="Peptidase C3" evidence="4">
    <location>
        <begin position="1243"/>
        <end position="1475"/>
    </location>
</feature>
<feature type="domain" description="RdRp catalytic" evidence="2">
    <location>
        <begin position="1765"/>
        <end position="1888"/>
    </location>
</feature>
<feature type="active site" description="For picornain 3C-like protease activity" evidence="4">
    <location>
        <position position="1283"/>
    </location>
</feature>
<feature type="active site" description="For picornain 3C-like protease activity" evidence="4">
    <location>
        <position position="1331"/>
    </location>
</feature>
<feature type="active site" description="For picornain 3C-like protease activity" evidence="4">
    <location>
        <position position="1433"/>
    </location>
</feature>
<feature type="binding site" evidence="3">
    <location>
        <begin position="796"/>
        <end position="803"/>
    </location>
    <ligand>
        <name>ATP</name>
        <dbReference type="ChEBI" id="CHEBI:30616"/>
    </ligand>
</feature>
<feature type="site" description="Involved in the cleavage site specificity">
    <location>
        <position position="1451"/>
    </location>
</feature>
<feature type="glycosylation site" description="N-linked (GlcNAc...) asparagine; by host" evidence="7">
    <location>
        <position position="1228"/>
    </location>
</feature>
<feature type="mutagenesis site" description="No cleavage between X1 and X2." evidence="6">
    <location>
        <position position="423"/>
    </location>
</feature>
<feature type="mutagenesis site" description="No cleavage between X2 and NTB." evidence="6">
    <location>
        <position position="620"/>
    </location>
</feature>
<feature type="mutagenesis site" description="No cleavage between NTB and VPg." evidence="6">
    <location>
        <position position="1212"/>
    </location>
</feature>
<feature type="mutagenesis site" description="Complete loss of N-linked glycosylation." evidence="7">
    <original>T</original>
    <variation>A</variation>
    <location>
        <position position="1230"/>
    </location>
</feature>
<feature type="mutagenesis site" description="Complete loss of protease activity." evidence="6 8">
    <original>H</original>
    <variation>D</variation>
    <location>
        <position position="1283"/>
    </location>
</feature>
<feature type="mutagenesis site" description="Complete loss of protease activity." evidence="8">
    <original>H</original>
    <variation>L</variation>
    <location>
        <position position="1451"/>
    </location>
</feature>
<feature type="mutagenesis site" description="No effect." evidence="5">
    <original>Q</original>
    <variation>A</variation>
    <location>
        <position position="1465"/>
    </location>
</feature>
<feature type="mutagenesis site" description="No cleavage between 3C-like protease and RNA-directed RNA polymerase." evidence="5">
    <original>Q</original>
    <variation>A</variation>
    <location>
        <position position="1486"/>
    </location>
</feature>
<feature type="sequence conflict" description="In Ref. 3; AA sequence." evidence="9" ref="3">
    <original>T</original>
    <variation>A</variation>
    <location>
        <position position="1230"/>
    </location>
</feature>
<organism>
    <name type="scientific">Tomato ringspot virus (isolate raspberry)</name>
    <name type="common">ToRSV</name>
    <dbReference type="NCBI Taxonomy" id="12281"/>
    <lineage>
        <taxon>Viruses</taxon>
        <taxon>Riboviria</taxon>
        <taxon>Orthornavirae</taxon>
        <taxon>Pisuviricota</taxon>
        <taxon>Pisoniviricetes</taxon>
        <taxon>Picornavirales</taxon>
        <taxon>Secoviridae</taxon>
        <taxon>Comovirinae</taxon>
        <taxon>Nepovirus</taxon>
        <taxon>Nepovirus lycopersici</taxon>
    </lineage>
</organism>
<proteinExistence type="evidence at protein level"/>
<name>POL1_TORVR</name>
<accession>P29150</accession>
<accession>Q88875</accession>
<accession>Q88876</accession>
<dbReference type="EC" id="3.6.4.-"/>
<dbReference type="EC" id="3.4.22.-"/>
<dbReference type="EC" id="2.7.7.48"/>
<dbReference type="EMBL" id="L19655">
    <property type="protein sequence ID" value="AAA78254.1"/>
    <property type="molecule type" value="Genomic_RNA"/>
</dbReference>
<dbReference type="EMBL" id="M73822">
    <property type="protein sequence ID" value="AAA47941.1"/>
    <property type="molecule type" value="Genomic_RNA"/>
</dbReference>
<dbReference type="EMBL" id="M73822">
    <property type="protein sequence ID" value="AAA47942.1"/>
    <property type="status" value="ALT_INIT"/>
    <property type="molecule type" value="Genomic_RNA"/>
</dbReference>
<dbReference type="PIR" id="A40787">
    <property type="entry name" value="GNVVSR"/>
</dbReference>
<dbReference type="RefSeq" id="NP_620765.1">
    <property type="nucleotide sequence ID" value="NC_003840.1"/>
</dbReference>
<dbReference type="SMR" id="P29150"/>
<dbReference type="MEROPS" id="C03.012"/>
<dbReference type="iPTMnet" id="P29150"/>
<dbReference type="GeneID" id="956647"/>
<dbReference type="KEGG" id="vg:956647"/>
<dbReference type="Proteomes" id="UP000000410">
    <property type="component" value="Genome"/>
</dbReference>
<dbReference type="GO" id="GO:0044166">
    <property type="term" value="C:host cell endoplasmic reticulum lumen"/>
    <property type="evidence" value="ECO:0007669"/>
    <property type="project" value="UniProtKB-SubCell"/>
</dbReference>
<dbReference type="GO" id="GO:0044167">
    <property type="term" value="C:host cell endoplasmic reticulum membrane"/>
    <property type="evidence" value="ECO:0007669"/>
    <property type="project" value="UniProtKB-SubCell"/>
</dbReference>
<dbReference type="GO" id="GO:0016020">
    <property type="term" value="C:membrane"/>
    <property type="evidence" value="ECO:0007669"/>
    <property type="project" value="UniProtKB-KW"/>
</dbReference>
<dbReference type="GO" id="GO:0005524">
    <property type="term" value="F:ATP binding"/>
    <property type="evidence" value="ECO:0007669"/>
    <property type="project" value="UniProtKB-KW"/>
</dbReference>
<dbReference type="GO" id="GO:0004197">
    <property type="term" value="F:cysteine-type endopeptidase activity"/>
    <property type="evidence" value="ECO:0007669"/>
    <property type="project" value="InterPro"/>
</dbReference>
<dbReference type="GO" id="GO:0003723">
    <property type="term" value="F:RNA binding"/>
    <property type="evidence" value="ECO:0007669"/>
    <property type="project" value="UniProtKB-KW"/>
</dbReference>
<dbReference type="GO" id="GO:0003724">
    <property type="term" value="F:RNA helicase activity"/>
    <property type="evidence" value="ECO:0007669"/>
    <property type="project" value="InterPro"/>
</dbReference>
<dbReference type="GO" id="GO:0003968">
    <property type="term" value="F:RNA-directed RNA polymerase activity"/>
    <property type="evidence" value="ECO:0007669"/>
    <property type="project" value="UniProtKB-KW"/>
</dbReference>
<dbReference type="GO" id="GO:0006351">
    <property type="term" value="P:DNA-templated transcription"/>
    <property type="evidence" value="ECO:0007669"/>
    <property type="project" value="InterPro"/>
</dbReference>
<dbReference type="GO" id="GO:0006508">
    <property type="term" value="P:proteolysis"/>
    <property type="evidence" value="ECO:0007669"/>
    <property type="project" value="UniProtKB-KW"/>
</dbReference>
<dbReference type="GO" id="GO:0039694">
    <property type="term" value="P:viral RNA genome replication"/>
    <property type="evidence" value="ECO:0007669"/>
    <property type="project" value="InterPro"/>
</dbReference>
<dbReference type="CDD" id="cd23196">
    <property type="entry name" value="Secoviridae_RdRp"/>
    <property type="match status" value="1"/>
</dbReference>
<dbReference type="Gene3D" id="3.30.70.270">
    <property type="match status" value="1"/>
</dbReference>
<dbReference type="Gene3D" id="3.40.50.300">
    <property type="entry name" value="P-loop containing nucleotide triphosphate hydrolases"/>
    <property type="match status" value="1"/>
</dbReference>
<dbReference type="InterPro" id="IPR043502">
    <property type="entry name" value="DNA/RNA_pol_sf"/>
</dbReference>
<dbReference type="InterPro" id="IPR000605">
    <property type="entry name" value="Helicase_SF3_ssDNA/RNA_vir"/>
</dbReference>
<dbReference type="InterPro" id="IPR014759">
    <property type="entry name" value="Helicase_SF3_ssRNA_vir"/>
</dbReference>
<dbReference type="InterPro" id="IPR027417">
    <property type="entry name" value="P-loop_NTPase"/>
</dbReference>
<dbReference type="InterPro" id="IPR044067">
    <property type="entry name" value="PCV_3C_PRO"/>
</dbReference>
<dbReference type="InterPro" id="IPR043128">
    <property type="entry name" value="Rev_trsase/Diguanyl_cyclase"/>
</dbReference>
<dbReference type="InterPro" id="IPR001205">
    <property type="entry name" value="RNA-dir_pol_C"/>
</dbReference>
<dbReference type="InterPro" id="IPR007094">
    <property type="entry name" value="RNA-dir_pol_PSvirus"/>
</dbReference>
<dbReference type="Pfam" id="PF00680">
    <property type="entry name" value="RdRP_1"/>
    <property type="match status" value="1"/>
</dbReference>
<dbReference type="Pfam" id="PF00910">
    <property type="entry name" value="RNA_helicase"/>
    <property type="match status" value="1"/>
</dbReference>
<dbReference type="SUPFAM" id="SSF56672">
    <property type="entry name" value="DNA/RNA polymerases"/>
    <property type="match status" value="1"/>
</dbReference>
<dbReference type="PROSITE" id="PS51874">
    <property type="entry name" value="PCV_3C_PRO"/>
    <property type="match status" value="1"/>
</dbReference>
<dbReference type="PROSITE" id="PS50507">
    <property type="entry name" value="RDRP_SSRNA_POS"/>
    <property type="match status" value="1"/>
</dbReference>
<dbReference type="PROSITE" id="PS51218">
    <property type="entry name" value="SF3_HELICASE_2"/>
    <property type="match status" value="1"/>
</dbReference>
<organismHost>
    <name type="scientific">Nicotiana tabacum</name>
    <name type="common">Common tobacco</name>
    <dbReference type="NCBI Taxonomy" id="4097"/>
</organismHost>
<organismHost>
    <name type="scientific">Pelargonium</name>
    <dbReference type="NCBI Taxonomy" id="4030"/>
</organismHost>
<organismHost>
    <name type="scientific">Prunus</name>
    <dbReference type="NCBI Taxonomy" id="3754"/>
</organismHost>
<organismHost>
    <name type="scientific">Rubus</name>
    <name type="common">bramble</name>
    <dbReference type="NCBI Taxonomy" id="23216"/>
</organismHost>
<protein>
    <recommendedName>
        <fullName>RNA1 polyprotein</fullName>
    </recommendedName>
    <alternativeName>
        <fullName>P1</fullName>
    </alternativeName>
    <component>
        <recommendedName>
            <fullName>Protein X1</fullName>
        </recommendedName>
    </component>
    <component>
        <recommendedName>
            <fullName>Protein X2</fullName>
        </recommendedName>
    </component>
    <component>
        <recommendedName>
            <fullName>Putative ATP-dependent helicase</fullName>
            <ecNumber>3.6.4.-</ecNumber>
        </recommendedName>
        <alternativeName>
            <fullName>Membrane-binding protein</fullName>
        </alternativeName>
        <alternativeName>
            <fullName>NTP-binding protein</fullName>
            <shortName>NTB</shortName>
        </alternativeName>
    </component>
    <component>
        <recommendedName>
            <fullName>Viral genome-linked protein</fullName>
        </recommendedName>
        <alternativeName>
            <fullName>VPg</fullName>
        </alternativeName>
    </component>
    <component>
        <recommendedName>
            <fullName>Picornain 3C-like protease</fullName>
            <shortName>3C-like protease</shortName>
            <shortName>PRO</shortName>
            <ecNumber>3.4.22.-</ecNumber>
        </recommendedName>
    </component>
    <component>
        <recommendedName>
            <fullName>RNA-directed RNA polymerase</fullName>
            <shortName>POL</shortName>
            <ecNumber>2.7.7.48</ecNumber>
        </recommendedName>
    </component>
</protein>
<keyword id="KW-0067">ATP-binding</keyword>
<keyword id="KW-0191">Covalent protein-RNA linkage</keyword>
<keyword id="KW-0903">Direct protein sequencing</keyword>
<keyword id="KW-0325">Glycoprotein</keyword>
<keyword id="KW-0347">Helicase</keyword>
<keyword id="KW-1038">Host endoplasmic reticulum</keyword>
<keyword id="KW-1043">Host membrane</keyword>
<keyword id="KW-0378">Hydrolase</keyword>
<keyword id="KW-0472">Membrane</keyword>
<keyword id="KW-0547">Nucleotide-binding</keyword>
<keyword id="KW-0548">Nucleotidyltransferase</keyword>
<keyword id="KW-0645">Protease</keyword>
<keyword id="KW-1185">Reference proteome</keyword>
<keyword id="KW-0694">RNA-binding</keyword>
<keyword id="KW-0696">RNA-directed RNA polymerase</keyword>
<keyword id="KW-0788">Thiol protease</keyword>
<keyword id="KW-0808">Transferase</keyword>
<keyword id="KW-0812">Transmembrane</keyword>
<keyword id="KW-1133">Transmembrane helix</keyword>
<keyword id="KW-0693">Viral RNA replication</keyword>
<reference key="1">
    <citation type="journal article" date="1995" name="J. Gen. Virol.">
        <title>Nucleotide sequence of tomato ringspot virus RNA1.</title>
        <authorList>
            <person name="Rott M.E."/>
            <person name="Gilchrist A."/>
            <person name="Lee L."/>
            <person name="Rochon D.M."/>
        </authorList>
    </citation>
    <scope>NUCLEOTIDE SEQUENCE [GENOMIC RNA]</scope>
</reference>
<reference key="2">
    <citation type="journal article" date="1991" name="Virology">
        <title>Comparison of the 5' and 3' termini of tomato ringspot virus RNA1 and RNA2: evidence for RNA recombination.</title>
        <authorList>
            <person name="Rott M.E."/>
            <person name="Tremaine J.H."/>
            <person name="Rochon D.M."/>
        </authorList>
    </citation>
    <scope>NUCLEOTIDE SEQUENCE [GENOMIC RNA] OF 1-354</scope>
</reference>
<reference key="3">
    <citation type="journal article" date="1999" name="J. Gen. Virol.">
        <title>Proteolytic processing of tomato ringspot nepovirus Picornain 3C-like protease precursors: definition of the domains for the VPg, protease and putative RNA-dependent RNA polymerase.</title>
        <authorList>
            <person name="Wang A."/>
            <person name="Carrier K."/>
            <person name="Chisholm J."/>
            <person name="Wieczorek A."/>
            <person name="Huguenot C."/>
            <person name="Sanfacon H."/>
        </authorList>
    </citation>
    <scope>PROTEIN SEQUENCE OF 1213-1247 AND 1487-1502</scope>
    <scope>PROTEOLYTIC PROCESSING OF POLYPROTEIN</scope>
    <scope>MUTAGENESIS OF GLN-1465 AND GLN-1486</scope>
</reference>
<reference key="4">
    <citation type="journal article" date="1995" name="J. Gen. Virol.">
        <title>Tomato ringspot nepovirus protease: characterization and cleavage site specificity.</title>
        <authorList>
            <person name="Hans F."/>
            <person name="Sanfacon H."/>
        </authorList>
    </citation>
    <scope>CHARACTERIZATION OF PROTEASE</scope>
    <scope>MUTAGENESIS OF HIS-1283 AND HIS-1451</scope>
</reference>
<reference key="5">
    <citation type="journal article" date="2000" name="J. Gen. Virol.">
        <title>Proteolytic processing at a novel cleavage site in the N-terminal region of the tomato ringspot nepovirus RNA-1-encoded polyprotein in vitro.</title>
        <authorList>
            <person name="Wang A."/>
            <person name="Sanfacon H."/>
        </authorList>
    </citation>
    <scope>PROTEOLYTIC PROCESSING OF POLYPROTEIN</scope>
    <scope>MUTAGENESIS OF GLN-423; GLN-620; GLN-1212 AND HIS-1283</scope>
</reference>
<reference key="6">
    <citation type="journal article" date="2003" name="J. Virol.">
        <title>Tomato ringspot virus proteins containing the nucleoside triphosphate binding domain are transmembrane proteins that associate with the endoplasmic reticulum and cofractionate with replication complexes.</title>
        <authorList>
            <person name="Han S."/>
            <person name="Sanfacon H."/>
        </authorList>
    </citation>
    <scope>SUBCELLULAR LOCATION OF THE NTB-VPG POLYPROTEIN</scope>
</reference>
<reference key="7">
    <citation type="journal article" date="2004" name="J. Gen. Virol.">
        <title>Topogenesis in membranes of the NTB-VPg protein of Tomato ringspot nepovirus: definition of the C-terminal transmembrane domain.</title>
        <authorList>
            <person name="Wang A."/>
            <person name="Han S."/>
            <person name="Sanfacon H."/>
        </authorList>
    </citation>
    <scope>TOPOLOGY OF THE NTB-VPG POLYPROTEIN</scope>
    <scope>GLYCOSYLATION</scope>
    <scope>MUTAGENESIS OF THR-1230</scope>
</reference>